<gene>
    <name type="ordered locus">VC_A0539</name>
</gene>
<protein>
    <recommendedName>
        <fullName evidence="1">UPF0312 protein VC_A0539</fullName>
    </recommendedName>
</protein>
<dbReference type="EMBL" id="AE003853">
    <property type="protein sequence ID" value="AAF96441.1"/>
    <property type="molecule type" value="Genomic_DNA"/>
</dbReference>
<dbReference type="PIR" id="F82448">
    <property type="entry name" value="F82448"/>
</dbReference>
<dbReference type="RefSeq" id="NP_232929.1">
    <property type="nucleotide sequence ID" value="NC_002506.1"/>
</dbReference>
<dbReference type="RefSeq" id="WP_000753206.1">
    <property type="nucleotide sequence ID" value="NZ_LT906615.1"/>
</dbReference>
<dbReference type="SMR" id="Q9KM50"/>
<dbReference type="STRING" id="243277.VC_A0539"/>
<dbReference type="DNASU" id="2612254"/>
<dbReference type="EnsemblBacteria" id="AAF96441">
    <property type="protein sequence ID" value="AAF96441"/>
    <property type="gene ID" value="VC_A0539"/>
</dbReference>
<dbReference type="KEGG" id="vch:VC_A0539"/>
<dbReference type="PATRIC" id="fig|243277.26.peg.3167"/>
<dbReference type="eggNOG" id="COG2353">
    <property type="taxonomic scope" value="Bacteria"/>
</dbReference>
<dbReference type="HOGENOM" id="CLU_071003_1_2_6"/>
<dbReference type="Proteomes" id="UP000000584">
    <property type="component" value="Chromosome 2"/>
</dbReference>
<dbReference type="GO" id="GO:0005615">
    <property type="term" value="C:extracellular space"/>
    <property type="evidence" value="ECO:0000318"/>
    <property type="project" value="GO_Central"/>
</dbReference>
<dbReference type="GO" id="GO:0042597">
    <property type="term" value="C:periplasmic space"/>
    <property type="evidence" value="ECO:0007669"/>
    <property type="project" value="UniProtKB-SubCell"/>
</dbReference>
<dbReference type="Gene3D" id="2.40.128.110">
    <property type="entry name" value="Lipid/polyisoprenoid-binding, YceI-like"/>
    <property type="match status" value="1"/>
</dbReference>
<dbReference type="HAMAP" id="MF_00780">
    <property type="entry name" value="UPF0312"/>
    <property type="match status" value="1"/>
</dbReference>
<dbReference type="InterPro" id="IPR007372">
    <property type="entry name" value="Lipid/polyisoprenoid-bd_YceI"/>
</dbReference>
<dbReference type="InterPro" id="IPR036761">
    <property type="entry name" value="TTHA0802/YceI-like_sf"/>
</dbReference>
<dbReference type="InterPro" id="IPR023480">
    <property type="entry name" value="UPF0312/YceI"/>
</dbReference>
<dbReference type="NCBIfam" id="NF002994">
    <property type="entry name" value="PRK03757.1"/>
    <property type="match status" value="1"/>
</dbReference>
<dbReference type="PANTHER" id="PTHR34406">
    <property type="entry name" value="PROTEIN YCEI"/>
    <property type="match status" value="1"/>
</dbReference>
<dbReference type="PANTHER" id="PTHR34406:SF1">
    <property type="entry name" value="PROTEIN YCEI"/>
    <property type="match status" value="1"/>
</dbReference>
<dbReference type="Pfam" id="PF04264">
    <property type="entry name" value="YceI"/>
    <property type="match status" value="1"/>
</dbReference>
<dbReference type="SMART" id="SM00867">
    <property type="entry name" value="YceI"/>
    <property type="match status" value="1"/>
</dbReference>
<dbReference type="SUPFAM" id="SSF101874">
    <property type="entry name" value="YceI-like"/>
    <property type="match status" value="1"/>
</dbReference>
<feature type="signal peptide" evidence="1">
    <location>
        <begin position="1"/>
        <end position="22"/>
    </location>
</feature>
<feature type="chain" id="PRO_0000036287" description="UPF0312 protein VC_A0539">
    <location>
        <begin position="23"/>
        <end position="189"/>
    </location>
</feature>
<reference key="1">
    <citation type="journal article" date="2000" name="Nature">
        <title>DNA sequence of both chromosomes of the cholera pathogen Vibrio cholerae.</title>
        <authorList>
            <person name="Heidelberg J.F."/>
            <person name="Eisen J.A."/>
            <person name="Nelson W.C."/>
            <person name="Clayton R.A."/>
            <person name="Gwinn M.L."/>
            <person name="Dodson R.J."/>
            <person name="Haft D.H."/>
            <person name="Hickey E.K."/>
            <person name="Peterson J.D."/>
            <person name="Umayam L.A."/>
            <person name="Gill S.R."/>
            <person name="Nelson K.E."/>
            <person name="Read T.D."/>
            <person name="Tettelin H."/>
            <person name="Richardson D.L."/>
            <person name="Ermolaeva M.D."/>
            <person name="Vamathevan J.J."/>
            <person name="Bass S."/>
            <person name="Qin H."/>
            <person name="Dragoi I."/>
            <person name="Sellers P."/>
            <person name="McDonald L.A."/>
            <person name="Utterback T.R."/>
            <person name="Fleischmann R.D."/>
            <person name="Nierman W.C."/>
            <person name="White O."/>
            <person name="Salzberg S.L."/>
            <person name="Smith H.O."/>
            <person name="Colwell R.R."/>
            <person name="Mekalanos J.J."/>
            <person name="Venter J.C."/>
            <person name="Fraser C.M."/>
        </authorList>
    </citation>
    <scope>NUCLEOTIDE SEQUENCE [LARGE SCALE GENOMIC DNA]</scope>
    <source>
        <strain>ATCC 39315 / El Tor Inaba N16961</strain>
    </source>
</reference>
<sequence length="189" mass="20422">MKKTLMAVGLAAVMSIPFAANAADYVIDTKGAHASINFKVNHLGYSYIKGRFNKFDGEFSYDPANIAASSVVVNVDTRSLDSNHAERDKHIRSADFIDASKYSTATFKSTEVVDKGNGQLEVKGDLTLHGQTKPIVINAEFIGAGQDPWGGQRSGFAGTTRLELKDFGIQVMGASSYVDMELHVEGVQK</sequence>
<comment type="subcellular location">
    <subcellularLocation>
        <location evidence="1">Periplasm</location>
    </subcellularLocation>
</comment>
<comment type="similarity">
    <text evidence="1">Belongs to the UPF0312 family. Type 1 subfamily.</text>
</comment>
<accession>Q9KM50</accession>
<proteinExistence type="inferred from homology"/>
<name>Y3339_VIBCH</name>
<evidence type="ECO:0000255" key="1">
    <source>
        <dbReference type="HAMAP-Rule" id="MF_00780"/>
    </source>
</evidence>
<organism>
    <name type="scientific">Vibrio cholerae serotype O1 (strain ATCC 39315 / El Tor Inaba N16961)</name>
    <dbReference type="NCBI Taxonomy" id="243277"/>
    <lineage>
        <taxon>Bacteria</taxon>
        <taxon>Pseudomonadati</taxon>
        <taxon>Pseudomonadota</taxon>
        <taxon>Gammaproteobacteria</taxon>
        <taxon>Vibrionales</taxon>
        <taxon>Vibrionaceae</taxon>
        <taxon>Vibrio</taxon>
    </lineage>
</organism>
<keyword id="KW-0574">Periplasm</keyword>
<keyword id="KW-1185">Reference proteome</keyword>
<keyword id="KW-0732">Signal</keyword>